<keyword id="KW-0217">Developmental protein</keyword>
<keyword id="KW-0238">DNA-binding</keyword>
<keyword id="KW-0371">Homeobox</keyword>
<keyword id="KW-0539">Nucleus</keyword>
<keyword id="KW-1185">Reference proteome</keyword>
<keyword id="KW-0804">Transcription</keyword>
<keyword id="KW-0805">Transcription regulation</keyword>
<feature type="chain" id="PRO_0000200115" description="Homeobox protein Hox-B2a">
    <location>
        <begin position="1"/>
        <end position="390"/>
    </location>
</feature>
<feature type="DNA-binding region" description="Homeobox" evidence="1">
    <location>
        <begin position="158"/>
        <end position="217"/>
    </location>
</feature>
<feature type="region of interest" description="Disordered" evidence="2">
    <location>
        <begin position="40"/>
        <end position="73"/>
    </location>
</feature>
<feature type="region of interest" description="Disordered" evidence="2">
    <location>
        <begin position="81"/>
        <end position="100"/>
    </location>
</feature>
<feature type="region of interest" description="Disordered" evidence="2">
    <location>
        <begin position="108"/>
        <end position="155"/>
    </location>
</feature>
<feature type="region of interest" description="Disordered" evidence="2">
    <location>
        <begin position="211"/>
        <end position="338"/>
    </location>
</feature>
<feature type="short sequence motif" description="Antp-type hexapeptide">
    <location>
        <begin position="103"/>
        <end position="108"/>
    </location>
</feature>
<feature type="compositionally biased region" description="Polar residues" evidence="2">
    <location>
        <begin position="52"/>
        <end position="73"/>
    </location>
</feature>
<feature type="compositionally biased region" description="Low complexity" evidence="2">
    <location>
        <begin position="118"/>
        <end position="135"/>
    </location>
</feature>
<feature type="compositionally biased region" description="Low complexity" evidence="2">
    <location>
        <begin position="244"/>
        <end position="262"/>
    </location>
</feature>
<feature type="compositionally biased region" description="Polar residues" evidence="2">
    <location>
        <begin position="263"/>
        <end position="290"/>
    </location>
</feature>
<feature type="sequence conflict" description="In Ref. 4." evidence="5" ref="4">
    <original>GQEGEPSGFDL</original>
    <variation>AKKASPAVLTS</variation>
    <location>
        <begin position="223"/>
        <end position="233"/>
    </location>
</feature>
<sequence>MNFEFEREIGFINSQPSLAECLTSFPAVLESFQTSSIKDSTAIPPPFEHTIPSLSPCTGNQARPRSQKRTASNGLQLRTQTAPPTQHQQGPAPLSGGAPLAHEFPWMKEKKSSKKCPKPGATAAAAAASPSQASSGYTTAGLESPTEIQGGLDNVSGSRRLRTAYTNTQLLELEKEFHFNKYLCRPRRVEIAALLDLTERQVKVWFQNRRMKHKRQTTHHRDGQEGEPSGFDLLEGTDASSPYSSQSLEVSGSGSAAPSESETCPTTAAYTNSSDKSQPTPEEGQASQPEPASVPDTAVHSPPYPTPTADNPTTMAEGRAAGPEHSFTEPQDATSLPDLNFFSTDSCLQISDALSPSLQSSLDSPVDFSEEDFDLFTSTLCTIDLQHLQF</sequence>
<name>HXB2A_DANRE</name>
<reference key="1">
    <citation type="journal article" date="1998" name="Dev. Dyn.">
        <title>Ectopic expression of hoxb2 after retinoic acid treatment or mRNA injection: disruption of hindbrain and craniofacial morphogenesis in zebrafish embryos.</title>
        <authorList>
            <person name="Yan Y.-L."/>
            <person name="Jowett T."/>
            <person name="Postlethwait J.H."/>
        </authorList>
    </citation>
    <scope>NUCLEOTIDE SEQUENCE [MRNA]</scope>
    <scope>FUNCTION</scope>
    <scope>DEVELOPMENTAL STAGE</scope>
</reference>
<reference key="2">
    <citation type="journal article" date="2013" name="Nature">
        <title>The zebrafish reference genome sequence and its relationship to the human genome.</title>
        <authorList>
            <person name="Howe K."/>
            <person name="Clark M.D."/>
            <person name="Torroja C.F."/>
            <person name="Torrance J."/>
            <person name="Berthelot C."/>
            <person name="Muffato M."/>
            <person name="Collins J.E."/>
            <person name="Humphray S."/>
            <person name="McLaren K."/>
            <person name="Matthews L."/>
            <person name="McLaren S."/>
            <person name="Sealy I."/>
            <person name="Caccamo M."/>
            <person name="Churcher C."/>
            <person name="Scott C."/>
            <person name="Barrett J.C."/>
            <person name="Koch R."/>
            <person name="Rauch G.J."/>
            <person name="White S."/>
            <person name="Chow W."/>
            <person name="Kilian B."/>
            <person name="Quintais L.T."/>
            <person name="Guerra-Assuncao J.A."/>
            <person name="Zhou Y."/>
            <person name="Gu Y."/>
            <person name="Yen J."/>
            <person name="Vogel J.H."/>
            <person name="Eyre T."/>
            <person name="Redmond S."/>
            <person name="Banerjee R."/>
            <person name="Chi J."/>
            <person name="Fu B."/>
            <person name="Langley E."/>
            <person name="Maguire S.F."/>
            <person name="Laird G.K."/>
            <person name="Lloyd D."/>
            <person name="Kenyon E."/>
            <person name="Donaldson S."/>
            <person name="Sehra H."/>
            <person name="Almeida-King J."/>
            <person name="Loveland J."/>
            <person name="Trevanion S."/>
            <person name="Jones M."/>
            <person name="Quail M."/>
            <person name="Willey D."/>
            <person name="Hunt A."/>
            <person name="Burton J."/>
            <person name="Sims S."/>
            <person name="McLay K."/>
            <person name="Plumb B."/>
            <person name="Davis J."/>
            <person name="Clee C."/>
            <person name="Oliver K."/>
            <person name="Clark R."/>
            <person name="Riddle C."/>
            <person name="Elliot D."/>
            <person name="Threadgold G."/>
            <person name="Harden G."/>
            <person name="Ware D."/>
            <person name="Begum S."/>
            <person name="Mortimore B."/>
            <person name="Kerry G."/>
            <person name="Heath P."/>
            <person name="Phillimore B."/>
            <person name="Tracey A."/>
            <person name="Corby N."/>
            <person name="Dunn M."/>
            <person name="Johnson C."/>
            <person name="Wood J."/>
            <person name="Clark S."/>
            <person name="Pelan S."/>
            <person name="Griffiths G."/>
            <person name="Smith M."/>
            <person name="Glithero R."/>
            <person name="Howden P."/>
            <person name="Barker N."/>
            <person name="Lloyd C."/>
            <person name="Stevens C."/>
            <person name="Harley J."/>
            <person name="Holt K."/>
            <person name="Panagiotidis G."/>
            <person name="Lovell J."/>
            <person name="Beasley H."/>
            <person name="Henderson C."/>
            <person name="Gordon D."/>
            <person name="Auger K."/>
            <person name="Wright D."/>
            <person name="Collins J."/>
            <person name="Raisen C."/>
            <person name="Dyer L."/>
            <person name="Leung K."/>
            <person name="Robertson L."/>
            <person name="Ambridge K."/>
            <person name="Leongamornlert D."/>
            <person name="McGuire S."/>
            <person name="Gilderthorp R."/>
            <person name="Griffiths C."/>
            <person name="Manthravadi D."/>
            <person name="Nichol S."/>
            <person name="Barker G."/>
            <person name="Whitehead S."/>
            <person name="Kay M."/>
            <person name="Brown J."/>
            <person name="Murnane C."/>
            <person name="Gray E."/>
            <person name="Humphries M."/>
            <person name="Sycamore N."/>
            <person name="Barker D."/>
            <person name="Saunders D."/>
            <person name="Wallis J."/>
            <person name="Babbage A."/>
            <person name="Hammond S."/>
            <person name="Mashreghi-Mohammadi M."/>
            <person name="Barr L."/>
            <person name="Martin S."/>
            <person name="Wray P."/>
            <person name="Ellington A."/>
            <person name="Matthews N."/>
            <person name="Ellwood M."/>
            <person name="Woodmansey R."/>
            <person name="Clark G."/>
            <person name="Cooper J."/>
            <person name="Tromans A."/>
            <person name="Grafham D."/>
            <person name="Skuce C."/>
            <person name="Pandian R."/>
            <person name="Andrews R."/>
            <person name="Harrison E."/>
            <person name="Kimberley A."/>
            <person name="Garnett J."/>
            <person name="Fosker N."/>
            <person name="Hall R."/>
            <person name="Garner P."/>
            <person name="Kelly D."/>
            <person name="Bird C."/>
            <person name="Palmer S."/>
            <person name="Gehring I."/>
            <person name="Berger A."/>
            <person name="Dooley C.M."/>
            <person name="Ersan-Urun Z."/>
            <person name="Eser C."/>
            <person name="Geiger H."/>
            <person name="Geisler M."/>
            <person name="Karotki L."/>
            <person name="Kirn A."/>
            <person name="Konantz J."/>
            <person name="Konantz M."/>
            <person name="Oberlander M."/>
            <person name="Rudolph-Geiger S."/>
            <person name="Teucke M."/>
            <person name="Lanz C."/>
            <person name="Raddatz G."/>
            <person name="Osoegawa K."/>
            <person name="Zhu B."/>
            <person name="Rapp A."/>
            <person name="Widaa S."/>
            <person name="Langford C."/>
            <person name="Yang F."/>
            <person name="Schuster S.C."/>
            <person name="Carter N.P."/>
            <person name="Harrow J."/>
            <person name="Ning Z."/>
            <person name="Herrero J."/>
            <person name="Searle S.M."/>
            <person name="Enright A."/>
            <person name="Geisler R."/>
            <person name="Plasterk R.H."/>
            <person name="Lee C."/>
            <person name="Westerfield M."/>
            <person name="de Jong P.J."/>
            <person name="Zon L.I."/>
            <person name="Postlethwait J.H."/>
            <person name="Nusslein-Volhard C."/>
            <person name="Hubbard T.J."/>
            <person name="Roest Crollius H."/>
            <person name="Rogers J."/>
            <person name="Stemple D.L."/>
        </authorList>
    </citation>
    <scope>NUCLEOTIDE SEQUENCE [LARGE SCALE GENOMIC DNA]</scope>
    <source>
        <strain>Tuebingen</strain>
    </source>
</reference>
<reference key="3">
    <citation type="submission" date="2004-02" db="EMBL/GenBank/DDBJ databases">
        <authorList>
            <consortium name="NIH - Zebrafish Gene Collection (ZGC) project"/>
        </authorList>
    </citation>
    <scope>NUCLEOTIDE SEQUENCE [LARGE SCALE MRNA]</scope>
    <source>
        <tissue>Embryo</tissue>
    </source>
</reference>
<reference key="4">
    <citation type="journal article" date="1998" name="Development">
        <title>Zebrafish hox genes: expression in the hindbrain region of wild-type and mutants of the segmentation gene, valentino.</title>
        <authorList>
            <person name="Prince V.E."/>
            <person name="Moens C.B."/>
            <person name="Kimmel C.B."/>
            <person name="Ho R.K."/>
        </authorList>
    </citation>
    <scope>NUCLEOTIDE SEQUENCE [MRNA] OF 189-233</scope>
    <scope>DEVELOPMENTAL STAGE</scope>
    <source>
        <tissue>Embryo</tissue>
    </source>
</reference>
<comment type="function">
    <text evidence="4">Sequence-specific transcription factor which is part of a developmental regulatory system that provides cells with specific positional identities on the anterior-posterior axis. Plays an important role in the patterning of hindbrain and pharyngeal arches.</text>
</comment>
<comment type="subcellular location">
    <subcellularLocation>
        <location>Nucleus</location>
    </subcellularLocation>
</comment>
<comment type="developmental stage">
    <text evidence="3 4">First expressed at the 1-somite stage in the presumptive rhombomeres 3 (r3) and 5 of the developing hindbrain. By the 3- to 4-somite stages, r5 expression has increased and there is weak expression in r4 and posterior to r6. From the 10- to 20-somite stages, confined to r3, r4 and r5 with highest levels in r3 and lowest levels in r5.</text>
</comment>
<comment type="similarity">
    <text evidence="5">Belongs to the Antp homeobox family. Proboscipedia subfamily.</text>
</comment>
<gene>
    <name type="primary">hoxb2a</name>
    <name type="synonym">hoxb2</name>
</gene>
<evidence type="ECO:0000255" key="1">
    <source>
        <dbReference type="PROSITE-ProRule" id="PRU00108"/>
    </source>
</evidence>
<evidence type="ECO:0000256" key="2">
    <source>
        <dbReference type="SAM" id="MobiDB-lite"/>
    </source>
</evidence>
<evidence type="ECO:0000269" key="3">
    <source>
    </source>
</evidence>
<evidence type="ECO:0000269" key="4">
    <source>
    </source>
</evidence>
<evidence type="ECO:0000305" key="5"/>
<accession>O42367</accession>
<accession>O93365</accession>
<organism>
    <name type="scientific">Danio rerio</name>
    <name type="common">Zebrafish</name>
    <name type="synonym">Brachydanio rerio</name>
    <dbReference type="NCBI Taxonomy" id="7955"/>
    <lineage>
        <taxon>Eukaryota</taxon>
        <taxon>Metazoa</taxon>
        <taxon>Chordata</taxon>
        <taxon>Craniata</taxon>
        <taxon>Vertebrata</taxon>
        <taxon>Euteleostomi</taxon>
        <taxon>Actinopterygii</taxon>
        <taxon>Neopterygii</taxon>
        <taxon>Teleostei</taxon>
        <taxon>Ostariophysi</taxon>
        <taxon>Cypriniformes</taxon>
        <taxon>Danionidae</taxon>
        <taxon>Danioninae</taxon>
        <taxon>Danio</taxon>
    </lineage>
</organism>
<proteinExistence type="evidence at transcript level"/>
<protein>
    <recommendedName>
        <fullName>Homeobox protein Hox-B2a</fullName>
        <shortName>Hox-B2</shortName>
    </recommendedName>
</protein>
<dbReference type="EMBL" id="AF071568">
    <property type="protein sequence ID" value="AAD03832.1"/>
    <property type="molecule type" value="mRNA"/>
</dbReference>
<dbReference type="EMBL" id="AL645782">
    <property type="protein sequence ID" value="CAD59117.1"/>
    <property type="molecule type" value="Genomic_DNA"/>
</dbReference>
<dbReference type="EMBL" id="BC065967">
    <property type="protein sequence ID" value="AAH65967.1"/>
    <property type="molecule type" value="mRNA"/>
</dbReference>
<dbReference type="EMBL" id="Y13949">
    <property type="protein sequence ID" value="CAA74287.1"/>
    <property type="molecule type" value="mRNA"/>
</dbReference>
<dbReference type="RefSeq" id="NP_571191.1">
    <property type="nucleotide sequence ID" value="NM_131116.2"/>
</dbReference>
<dbReference type="SMR" id="O42367"/>
<dbReference type="FunCoup" id="O42367">
    <property type="interactions" value="20"/>
</dbReference>
<dbReference type="STRING" id="7955.ENSDARP00000118498"/>
<dbReference type="PaxDb" id="7955-ENSDARP00000118498"/>
<dbReference type="GeneID" id="30338"/>
<dbReference type="KEGG" id="dre:30338"/>
<dbReference type="AGR" id="ZFIN:ZDB-GENE-990415-103"/>
<dbReference type="CTD" id="30338"/>
<dbReference type="ZFIN" id="ZDB-GENE-990415-103">
    <property type="gene designation" value="hoxb2a"/>
</dbReference>
<dbReference type="eggNOG" id="KOG0489">
    <property type="taxonomic scope" value="Eukaryota"/>
</dbReference>
<dbReference type="InParanoid" id="O42367"/>
<dbReference type="OrthoDB" id="6159439at2759"/>
<dbReference type="PhylomeDB" id="O42367"/>
<dbReference type="PRO" id="PR:O42367"/>
<dbReference type="Proteomes" id="UP000000437">
    <property type="component" value="Chromosome 3"/>
</dbReference>
<dbReference type="GO" id="GO:0005634">
    <property type="term" value="C:nucleus"/>
    <property type="evidence" value="ECO:0000318"/>
    <property type="project" value="GO_Central"/>
</dbReference>
<dbReference type="GO" id="GO:0000981">
    <property type="term" value="F:DNA-binding transcription factor activity, RNA polymerase II-specific"/>
    <property type="evidence" value="ECO:0000318"/>
    <property type="project" value="GO_Central"/>
</dbReference>
<dbReference type="GO" id="GO:0000978">
    <property type="term" value="F:RNA polymerase II cis-regulatory region sequence-specific DNA binding"/>
    <property type="evidence" value="ECO:0000318"/>
    <property type="project" value="GO_Central"/>
</dbReference>
<dbReference type="GO" id="GO:0006357">
    <property type="term" value="P:regulation of transcription by RNA polymerase II"/>
    <property type="evidence" value="ECO:0000318"/>
    <property type="project" value="GO_Central"/>
</dbReference>
<dbReference type="CDD" id="cd00086">
    <property type="entry name" value="homeodomain"/>
    <property type="match status" value="1"/>
</dbReference>
<dbReference type="FunFam" id="1.10.10.60:FF:000145">
    <property type="entry name" value="homeobox protein Hox-A2"/>
    <property type="match status" value="1"/>
</dbReference>
<dbReference type="Gene3D" id="1.10.10.60">
    <property type="entry name" value="Homeodomain-like"/>
    <property type="match status" value="1"/>
</dbReference>
<dbReference type="InterPro" id="IPR001356">
    <property type="entry name" value="HD"/>
</dbReference>
<dbReference type="InterPro" id="IPR020479">
    <property type="entry name" value="HD_metazoa"/>
</dbReference>
<dbReference type="InterPro" id="IPR001827">
    <property type="entry name" value="Homeobox_Antennapedia_CS"/>
</dbReference>
<dbReference type="InterPro" id="IPR017970">
    <property type="entry name" value="Homeobox_CS"/>
</dbReference>
<dbReference type="InterPro" id="IPR009057">
    <property type="entry name" value="Homeodomain-like_sf"/>
</dbReference>
<dbReference type="PANTHER" id="PTHR45664:SF7">
    <property type="entry name" value="HOMEOBOX PROTEIN HOX-B2"/>
    <property type="match status" value="1"/>
</dbReference>
<dbReference type="PANTHER" id="PTHR45664">
    <property type="entry name" value="PROTEIN ZERKNUELLT 1-RELATED"/>
    <property type="match status" value="1"/>
</dbReference>
<dbReference type="Pfam" id="PF00046">
    <property type="entry name" value="Homeodomain"/>
    <property type="match status" value="1"/>
</dbReference>
<dbReference type="PRINTS" id="PR00024">
    <property type="entry name" value="HOMEOBOX"/>
</dbReference>
<dbReference type="SMART" id="SM00389">
    <property type="entry name" value="HOX"/>
    <property type="match status" value="1"/>
</dbReference>
<dbReference type="SUPFAM" id="SSF46689">
    <property type="entry name" value="Homeodomain-like"/>
    <property type="match status" value="1"/>
</dbReference>
<dbReference type="PROSITE" id="PS00032">
    <property type="entry name" value="ANTENNAPEDIA"/>
    <property type="match status" value="1"/>
</dbReference>
<dbReference type="PROSITE" id="PS00027">
    <property type="entry name" value="HOMEOBOX_1"/>
    <property type="match status" value="1"/>
</dbReference>
<dbReference type="PROSITE" id="PS50071">
    <property type="entry name" value="HOMEOBOX_2"/>
    <property type="match status" value="1"/>
</dbReference>